<protein>
    <recommendedName>
        <fullName>C-reactive protein 1.1</fullName>
    </recommendedName>
</protein>
<accession>P06205</accession>
<sequence>MKTFHGPTCGTAVSLCLLLFLTSALEEGEITSKVKFPPSSSPSFPRLVMVGTLPDLQEITLCYWFKVNRLKGTLHMFSYATAKKDNELLTLIDEQGDFLFNVHGAPQLKVQCPNKIHIGKWHHVCHTWSSWEGEATIAVDGFHCKGNATGIAVGRTLSQGGLVVLGQDQDSVGGKFDATQSLEGELSELNLWNTVLNHEQIKYLSKCAHPSERHIYGNIIQWDKTQFKAYDGVVLSPNEICA</sequence>
<evidence type="ECO:0000250" key="1"/>
<evidence type="ECO:0000255" key="2"/>
<evidence type="ECO:0000255" key="3">
    <source>
        <dbReference type="PROSITE-ProRule" id="PRU01172"/>
    </source>
</evidence>
<evidence type="ECO:0000269" key="4">
    <source>
    </source>
</evidence>
<evidence type="ECO:0000305" key="5"/>
<dbReference type="EMBL" id="M14026">
    <property type="protein sequence ID" value="AAA28270.1"/>
    <property type="molecule type" value="Genomic_DNA"/>
</dbReference>
<dbReference type="PIR" id="C25192">
    <property type="entry name" value="C25192"/>
</dbReference>
<dbReference type="PIR" id="C25193">
    <property type="entry name" value="C25193"/>
</dbReference>
<dbReference type="SMR" id="P06205"/>
<dbReference type="TCDB" id="1.C.92.1.1">
    <property type="family name" value="the pentraxin (pentraxin) family"/>
</dbReference>
<dbReference type="UniLectin" id="P06205"/>
<dbReference type="iPTMnet" id="P06205"/>
<dbReference type="OrthoDB" id="6515930at2759"/>
<dbReference type="Proteomes" id="UP000694941">
    <property type="component" value="Unplaced"/>
</dbReference>
<dbReference type="GO" id="GO:0005576">
    <property type="term" value="C:extracellular region"/>
    <property type="evidence" value="ECO:0007669"/>
    <property type="project" value="UniProtKB-SubCell"/>
</dbReference>
<dbReference type="GO" id="GO:0046872">
    <property type="term" value="F:metal ion binding"/>
    <property type="evidence" value="ECO:0007669"/>
    <property type="project" value="UniProtKB-KW"/>
</dbReference>
<dbReference type="CDD" id="cd00152">
    <property type="entry name" value="PTX"/>
    <property type="match status" value="1"/>
</dbReference>
<dbReference type="Gene3D" id="2.60.120.200">
    <property type="match status" value="1"/>
</dbReference>
<dbReference type="InterPro" id="IPR013320">
    <property type="entry name" value="ConA-like_dom_sf"/>
</dbReference>
<dbReference type="InterPro" id="IPR051360">
    <property type="entry name" value="Neuronal_Pentraxin_Related"/>
</dbReference>
<dbReference type="InterPro" id="IPR030476">
    <property type="entry name" value="Pentaxin_CS"/>
</dbReference>
<dbReference type="InterPro" id="IPR001759">
    <property type="entry name" value="Pentraxin-related"/>
</dbReference>
<dbReference type="PANTHER" id="PTHR19277:SF161">
    <property type="entry name" value="LAMININ G DOMAIN-CONTAINING PROTEIN"/>
    <property type="match status" value="1"/>
</dbReference>
<dbReference type="PANTHER" id="PTHR19277">
    <property type="entry name" value="PENTRAXIN"/>
    <property type="match status" value="1"/>
</dbReference>
<dbReference type="Pfam" id="PF00354">
    <property type="entry name" value="Pentaxin"/>
    <property type="match status" value="1"/>
</dbReference>
<dbReference type="PRINTS" id="PR00895">
    <property type="entry name" value="PENTAXIN"/>
</dbReference>
<dbReference type="SMART" id="SM00159">
    <property type="entry name" value="PTX"/>
    <property type="match status" value="1"/>
</dbReference>
<dbReference type="SUPFAM" id="SSF49899">
    <property type="entry name" value="Concanavalin A-like lectins/glucanases"/>
    <property type="match status" value="1"/>
</dbReference>
<dbReference type="PROSITE" id="PS00289">
    <property type="entry name" value="PTX_1"/>
    <property type="match status" value="1"/>
</dbReference>
<dbReference type="PROSITE" id="PS51828">
    <property type="entry name" value="PTX_2"/>
    <property type="match status" value="1"/>
</dbReference>
<proteinExistence type="evidence at protein level"/>
<feature type="signal peptide" evidence="4">
    <location>
        <begin position="1"/>
        <end position="24"/>
    </location>
</feature>
<feature type="chain" id="PRO_0000023533" description="C-reactive protein 1.1">
    <location>
        <begin position="25"/>
        <end position="242"/>
    </location>
</feature>
<feature type="domain" description="Pentraxin (PTX)" evidence="3">
    <location>
        <begin position="30"/>
        <end position="241"/>
    </location>
</feature>
<feature type="binding site" evidence="2">
    <location>
        <position position="60"/>
    </location>
    <ligand>
        <name>phosphocholine</name>
        <dbReference type="ChEBI" id="CHEBI:295975"/>
    </ligand>
</feature>
<feature type="binding site" evidence="2">
    <location>
        <position position="63"/>
    </location>
    <ligand>
        <name>phosphocholine</name>
        <dbReference type="ChEBI" id="CHEBI:295975"/>
    </ligand>
</feature>
<feature type="binding site" evidence="1">
    <location>
        <position position="85"/>
    </location>
    <ligand>
        <name>Ca(2+)</name>
        <dbReference type="ChEBI" id="CHEBI:29108"/>
        <label>1</label>
    </ligand>
</feature>
<feature type="binding site" evidence="1">
    <location>
        <position position="86"/>
    </location>
    <ligand>
        <name>Ca(2+)</name>
        <dbReference type="ChEBI" id="CHEBI:29108"/>
        <label>1</label>
    </ligand>
</feature>
<feature type="binding site" evidence="1">
    <location>
        <position position="169"/>
    </location>
    <ligand>
        <name>Ca(2+)</name>
        <dbReference type="ChEBI" id="CHEBI:29108"/>
        <label>1</label>
    </ligand>
</feature>
<feature type="binding site" evidence="1">
    <location>
        <position position="170"/>
    </location>
    <ligand>
        <name>Ca(2+)</name>
        <dbReference type="ChEBI" id="CHEBI:29108"/>
        <label>1</label>
    </ligand>
</feature>
<feature type="binding site" evidence="1">
    <location>
        <position position="170"/>
    </location>
    <ligand>
        <name>Ca(2+)</name>
        <dbReference type="ChEBI" id="CHEBI:29108"/>
        <label>2</label>
    </ligand>
</feature>
<feature type="binding site" evidence="1">
    <location>
        <position position="180"/>
    </location>
    <ligand>
        <name>Ca(2+)</name>
        <dbReference type="ChEBI" id="CHEBI:29108"/>
        <label>2</label>
    </ligand>
</feature>
<feature type="glycosylation site" description="N-linked (GlcNAc...) asparagine" evidence="4">
    <location>
        <position position="147"/>
    </location>
</feature>
<feature type="disulfide bond" evidence="3 4">
    <location>
        <begin position="62"/>
        <end position="125"/>
    </location>
</feature>
<feature type="disulfide bond" evidence="4">
    <location>
        <begin position="112"/>
        <end position="144"/>
    </location>
</feature>
<feature type="disulfide bond" evidence="4">
    <location>
        <begin position="207"/>
        <end position="241"/>
    </location>
</feature>
<comment type="function">
    <text>Might serve the role of immunoglobulins.</text>
</comment>
<comment type="cofactor">
    <cofactor evidence="1">
        <name>Ca(2+)</name>
        <dbReference type="ChEBI" id="CHEBI:29108"/>
    </cofactor>
    <text evidence="1">Binds 2 calcium ions per subunit.</text>
</comment>
<comment type="subunit">
    <text>Homopentamer. Pentraxin (or pentaxin) have a discoid arrangement of 5 non-covalently bound subunits.</text>
</comment>
<comment type="subcellular location">
    <subcellularLocation>
        <location>Secreted</location>
    </subcellularLocation>
</comment>
<comment type="similarity">
    <text evidence="5">Belongs to the pentraxin family.</text>
</comment>
<organism>
    <name type="scientific">Limulus polyphemus</name>
    <name type="common">Atlantic horseshoe crab</name>
    <dbReference type="NCBI Taxonomy" id="6850"/>
    <lineage>
        <taxon>Eukaryota</taxon>
        <taxon>Metazoa</taxon>
        <taxon>Ecdysozoa</taxon>
        <taxon>Arthropoda</taxon>
        <taxon>Chelicerata</taxon>
        <taxon>Merostomata</taxon>
        <taxon>Xiphosura</taxon>
        <taxon>Limulidae</taxon>
        <taxon>Limulus</taxon>
    </lineage>
</organism>
<reference key="1">
    <citation type="journal article" date="1986" name="J. Biol. Chem.">
        <title>Isolation and characterization of Limulus C-reactive protein genes.</title>
        <authorList>
            <person name="Nguyen N.Y."/>
            <person name="Suzuki A."/>
            <person name="Cheng S.-M."/>
            <person name="Zon G."/>
            <person name="Liu T.-Y."/>
        </authorList>
    </citation>
    <scope>NUCLEOTIDE SEQUENCE [GENOMIC DNA]</scope>
</reference>
<reference key="2">
    <citation type="journal article" date="1986" name="J. Biol. Chem.">
        <title>The amino acid sequence of Limulus C-reactive protein. Evidence of polymorphism.</title>
        <authorList>
            <person name="Nguyen N.Y."/>
            <person name="Suzuki A."/>
            <person name="Boykins R.A."/>
            <person name="Liu T.-Y."/>
        </authorList>
    </citation>
    <scope>PROTEIN SEQUENCE OF 25-242</scope>
    <scope>DISULFIDE BONDS</scope>
    <scope>GLYCOSYLATION AT ASN-147</scope>
</reference>
<reference key="3">
    <citation type="journal article" date="1994" name="Structure">
        <title>Comparative analyses of pentraxins: implications for protomer assembly and ligand binding.</title>
        <authorList>
            <person name="Srinivasan N."/>
            <person name="White H.E."/>
            <person name="Emsley J."/>
            <person name="Wood S.P."/>
            <person name="Pepys M.B."/>
            <person name="Blundell T.L."/>
        </authorList>
    </citation>
    <scope>3D-STRUCTURE MODELING</scope>
</reference>
<keyword id="KW-0106">Calcium</keyword>
<keyword id="KW-0903">Direct protein sequencing</keyword>
<keyword id="KW-1015">Disulfide bond</keyword>
<keyword id="KW-0325">Glycoprotein</keyword>
<keyword id="KW-0479">Metal-binding</keyword>
<keyword id="KW-0964">Secreted</keyword>
<keyword id="KW-0732">Signal</keyword>
<name>CRP1_LIMPO</name>